<comment type="subunit">
    <text>Heterotetramer of two type I and two type II keratins. Keratin-4 is generally associated with keratin-13.</text>
</comment>
<comment type="tissue specificity">
    <text evidence="2">Expressed in the dorsal and ventral epithelium of the tongue. Highest expression levels are detected in the suprabasal layer with low levels detected in the basal cell layer. Within the suprabasal layer expression is highest in the spinous cells, decreases in the granular cells and is not detected in the stratum corneum.</text>
</comment>
<comment type="miscellaneous">
    <text>There are two types of cytoskeletal and microfibrillar keratin: I (acidic; 40-55 kDa) and II (neutral to basic; 56-70 kDa).</text>
</comment>
<comment type="similarity">
    <text evidence="1">Belongs to the intermediate filament family.</text>
</comment>
<comment type="sequence caution" evidence="3">
    <conflict type="erroneous initiation">
        <sequence resource="EMBL-CDS" id="AAH64008"/>
    </conflict>
</comment>
<reference key="1">
    <citation type="journal article" date="1986" name="Nucleic Acids Res.">
        <title>Nonepidermal members of the keratin multigene family: cDNA sequences and in situ localization of the mRNAs.</title>
        <authorList>
            <person name="Knapp B."/>
            <person name="Rentrop M."/>
            <person name="Schweizer J."/>
            <person name="Winter H."/>
        </authorList>
    </citation>
    <scope>NUCLEOTIDE SEQUENCE [MRNA]</scope>
    <scope>TISSUE SPECIFICITY</scope>
</reference>
<reference key="2">
    <citation type="journal article" date="2004" name="Genome Res.">
        <title>The status, quality, and expansion of the NIH full-length cDNA project: the Mammalian Gene Collection (MGC).</title>
        <authorList>
            <consortium name="The MGC Project Team"/>
        </authorList>
    </citation>
    <scope>NUCLEOTIDE SEQUENCE [LARGE SCALE MRNA]</scope>
    <source>
        <tissue>Thymus</tissue>
    </source>
</reference>
<reference key="3">
    <citation type="submission" date="2009-01" db="UniProtKB">
        <authorList>
            <person name="Lubec G."/>
            <person name="Sunyer B."/>
            <person name="Chen W.-Q."/>
        </authorList>
    </citation>
    <scope>PROTEIN SEQUENCE OF 157-163; 410-421 AND 439-449</scope>
    <scope>IDENTIFICATION BY MASS SPECTROMETRY</scope>
    <source>
        <strain>OF1</strain>
        <tissue>Hippocampus</tissue>
    </source>
</reference>
<reference key="4">
    <citation type="journal article" date="2014" name="Mol. Cell. Proteomics">
        <title>Immunoaffinity enrichment and mass spectrometry analysis of protein methylation.</title>
        <authorList>
            <person name="Guo A."/>
            <person name="Gu H."/>
            <person name="Zhou J."/>
            <person name="Mulhern D."/>
            <person name="Wang Y."/>
            <person name="Lee K.A."/>
            <person name="Yang V."/>
            <person name="Aguiar M."/>
            <person name="Kornhauser J."/>
            <person name="Jia X."/>
            <person name="Ren J."/>
            <person name="Beausoleil S.A."/>
            <person name="Silva J.C."/>
            <person name="Vemulapalli V."/>
            <person name="Bedford M.T."/>
            <person name="Comb M.J."/>
        </authorList>
    </citation>
    <scope>METHYLATION [LARGE SCALE ANALYSIS] AT ARG-13</scope>
    <scope>IDENTIFICATION BY MASS SPECTROMETRY [LARGE SCALE ANALYSIS]</scope>
    <source>
        <tissue>Embryo</tissue>
    </source>
</reference>
<sequence length="525" mass="56283">MIARQSSVRGASRGFSSGSAIAGGVKRVAFSSGSMSGGAGRCSSGGFGSRSLYNLGGHKSISMSVAGSCQGGGYGGAGGFGVGGYGAGFGAGGFGGGFGGSFNGRGGPGFPVCPAGGIQEVTINQSLLTPLQVEIDPEIQKIRTAEREQIKTLNNKFASFIDKVRFLEQQNKVLETKWNLLQQQTTTTSPKSLDPFFETYINALRKNLDTLSNDKGRLQSELKMMQDSVEDFKTKYEEEINKRTAAENDFVVLKKDVDAAYMIKVELEAKMESLKDEINFTRVLYEAELAQMQTHVSDTSVVLSMDNNRNLDLDGIIAEVRAQYEDIARKSKAEVESWYQIKVQQLQMSADQHGDSLKTTKNEISELNRMIQRLRAEIENIKKQSQTLQASVADAEQRGELALKDAYSKRAELETALQKAKEDLARLLRDYQALMNVKLALDVEIATYRKLLEGEECRMSGECKSAVSISVVGGSASIGGSGLGLGSGFCSGSGSGSGFGFGGGIYGGSGSKITSSATITKRSPR</sequence>
<proteinExistence type="evidence at protein level"/>
<feature type="chain" id="PRO_0000063723" description="Keratin, type II cytoskeletal 4">
    <location>
        <begin position="1"/>
        <end position="525"/>
    </location>
</feature>
<feature type="domain" description="IF rod" evidence="1">
    <location>
        <begin position="146"/>
        <end position="459"/>
    </location>
</feature>
<feature type="region of interest" description="Head">
    <location>
        <begin position="1"/>
        <end position="145"/>
    </location>
</feature>
<feature type="region of interest" description="Coil 1A">
    <location>
        <begin position="146"/>
        <end position="181"/>
    </location>
</feature>
<feature type="region of interest" description="Linker 1">
    <location>
        <begin position="182"/>
        <end position="200"/>
    </location>
</feature>
<feature type="region of interest" description="Coil 1B">
    <location>
        <begin position="201"/>
        <end position="292"/>
    </location>
</feature>
<feature type="region of interest" description="Linker 12">
    <location>
        <begin position="293"/>
        <end position="316"/>
    </location>
</feature>
<feature type="region of interest" description="Coil 2">
    <location>
        <begin position="317"/>
        <end position="455"/>
    </location>
</feature>
<feature type="region of interest" description="Tail">
    <location>
        <begin position="456"/>
        <end position="524"/>
    </location>
</feature>
<feature type="site" description="Stutter">
    <location>
        <position position="397"/>
    </location>
</feature>
<feature type="modified residue" description="Omega-N-methylarginine" evidence="4">
    <location>
        <position position="13"/>
    </location>
</feature>
<feature type="sequence conflict" description="In Ref. 1; CAA27207." evidence="3" ref="1">
    <original>R</original>
    <variation>P</variation>
    <location>
        <position position="13"/>
    </location>
</feature>
<feature type="sequence conflict" description="In Ref. 1; CAA27207." evidence="3" ref="1">
    <original>S</original>
    <variation>T</variation>
    <location>
        <position position="16"/>
    </location>
</feature>
<feature type="sequence conflict" description="In Ref. 2; AAH64008." evidence="3" ref="2">
    <original>G</original>
    <variation>D</variation>
    <location>
        <position position="79"/>
    </location>
</feature>
<feature type="sequence conflict" description="In Ref. 1; CAA27207." evidence="3" ref="1">
    <original>L</original>
    <variation>P</variation>
    <location>
        <position position="388"/>
    </location>
</feature>
<feature type="sequence conflict" description="In Ref. 1; CAA27207." evidence="3" ref="1">
    <original>ASIGG</original>
    <variation>QHWR</variation>
    <location>
        <begin position="476"/>
        <end position="480"/>
    </location>
</feature>
<accession>P07744</accession>
<accession>A6H6D6</accession>
<accession>Q6P3F5</accession>
<gene>
    <name type="primary">Krt4</name>
    <name type="synonym">Krt2-4</name>
</gene>
<organism>
    <name type="scientific">Mus musculus</name>
    <name type="common">Mouse</name>
    <dbReference type="NCBI Taxonomy" id="10090"/>
    <lineage>
        <taxon>Eukaryota</taxon>
        <taxon>Metazoa</taxon>
        <taxon>Chordata</taxon>
        <taxon>Craniata</taxon>
        <taxon>Vertebrata</taxon>
        <taxon>Euteleostomi</taxon>
        <taxon>Mammalia</taxon>
        <taxon>Eutheria</taxon>
        <taxon>Euarchontoglires</taxon>
        <taxon>Glires</taxon>
        <taxon>Rodentia</taxon>
        <taxon>Myomorpha</taxon>
        <taxon>Muroidea</taxon>
        <taxon>Muridae</taxon>
        <taxon>Murinae</taxon>
        <taxon>Mus</taxon>
        <taxon>Mus</taxon>
    </lineage>
</organism>
<name>K2C4_MOUSE</name>
<protein>
    <recommendedName>
        <fullName>Keratin, type II cytoskeletal 4</fullName>
    </recommendedName>
    <alternativeName>
        <fullName>Cytokeratin-4</fullName>
        <shortName>CK-4</shortName>
    </alternativeName>
    <alternativeName>
        <fullName>Cytoskeletal 57 kDa keratin</fullName>
    </alternativeName>
    <alternativeName>
        <fullName>Keratin-4</fullName>
        <shortName>K4</shortName>
    </alternativeName>
    <alternativeName>
        <fullName>Type-II keratin Kb4</fullName>
    </alternativeName>
</protein>
<evidence type="ECO:0000255" key="1">
    <source>
        <dbReference type="PROSITE-ProRule" id="PRU01188"/>
    </source>
</evidence>
<evidence type="ECO:0000269" key="2">
    <source>
    </source>
</evidence>
<evidence type="ECO:0000305" key="3"/>
<evidence type="ECO:0007744" key="4">
    <source>
    </source>
</evidence>
<dbReference type="EMBL" id="X03491">
    <property type="protein sequence ID" value="CAA27207.1"/>
    <property type="molecule type" value="mRNA"/>
</dbReference>
<dbReference type="EMBL" id="BC064008">
    <property type="protein sequence ID" value="AAH64008.1"/>
    <property type="status" value="ALT_INIT"/>
    <property type="molecule type" value="mRNA"/>
</dbReference>
<dbReference type="EMBL" id="BC145839">
    <property type="protein sequence ID" value="AAI45840.1"/>
    <property type="molecule type" value="mRNA"/>
</dbReference>
<dbReference type="EMBL" id="BC145841">
    <property type="protein sequence ID" value="AAI45842.1"/>
    <property type="molecule type" value="mRNA"/>
</dbReference>
<dbReference type="CCDS" id="CCDS37222.1"/>
<dbReference type="PIR" id="A23518">
    <property type="entry name" value="A23518"/>
</dbReference>
<dbReference type="RefSeq" id="NP_032501.2">
    <property type="nucleotide sequence ID" value="NM_008475.2"/>
</dbReference>
<dbReference type="SMR" id="P07744"/>
<dbReference type="BioGRID" id="201034">
    <property type="interactions" value="11"/>
</dbReference>
<dbReference type="FunCoup" id="P07744">
    <property type="interactions" value="23"/>
</dbReference>
<dbReference type="IntAct" id="P07744">
    <property type="interactions" value="2"/>
</dbReference>
<dbReference type="MINT" id="P07744"/>
<dbReference type="STRING" id="10090.ENSMUSP00000023797"/>
<dbReference type="GlyGen" id="P07744">
    <property type="glycosylation" value="1 site, 1 O-linked glycan (1 site)"/>
</dbReference>
<dbReference type="iPTMnet" id="P07744"/>
<dbReference type="PhosphoSitePlus" id="P07744"/>
<dbReference type="jPOST" id="P07744"/>
<dbReference type="PaxDb" id="10090-ENSMUSP00000023797"/>
<dbReference type="PeptideAtlas" id="P07744"/>
<dbReference type="ProteomicsDB" id="269055"/>
<dbReference type="Antibodypedia" id="3687">
    <property type="antibodies" value="513 antibodies from 38 providers"/>
</dbReference>
<dbReference type="DNASU" id="16682"/>
<dbReference type="Ensembl" id="ENSMUST00000023797.8">
    <property type="protein sequence ID" value="ENSMUSP00000023797.7"/>
    <property type="gene ID" value="ENSMUSG00000059668.7"/>
</dbReference>
<dbReference type="GeneID" id="16682"/>
<dbReference type="KEGG" id="mmu:16682"/>
<dbReference type="UCSC" id="uc007xuf.1">
    <property type="organism name" value="mouse"/>
</dbReference>
<dbReference type="AGR" id="MGI:96701"/>
<dbReference type="CTD" id="3851"/>
<dbReference type="MGI" id="MGI:96701">
    <property type="gene designation" value="Krt4"/>
</dbReference>
<dbReference type="VEuPathDB" id="HostDB:ENSMUSG00000059668"/>
<dbReference type="eggNOG" id="ENOG502QURK">
    <property type="taxonomic scope" value="Eukaryota"/>
</dbReference>
<dbReference type="GeneTree" id="ENSGT00940000161550"/>
<dbReference type="HOGENOM" id="CLU_012560_6_1_1"/>
<dbReference type="InParanoid" id="P07744"/>
<dbReference type="OMA" id="LMQDSVE"/>
<dbReference type="OrthoDB" id="9450813at2759"/>
<dbReference type="PhylomeDB" id="P07744"/>
<dbReference type="TreeFam" id="TF317854"/>
<dbReference type="Reactome" id="R-MMU-6805567">
    <property type="pathway name" value="Keratinization"/>
</dbReference>
<dbReference type="Reactome" id="R-MMU-6809371">
    <property type="pathway name" value="Formation of the cornified envelope"/>
</dbReference>
<dbReference type="BioGRID-ORCS" id="16682">
    <property type="hits" value="2 hits in 77 CRISPR screens"/>
</dbReference>
<dbReference type="ChiTaRS" id="Krt4">
    <property type="organism name" value="mouse"/>
</dbReference>
<dbReference type="PRO" id="PR:P07744"/>
<dbReference type="Proteomes" id="UP000000589">
    <property type="component" value="Chromosome 15"/>
</dbReference>
<dbReference type="RNAct" id="P07744">
    <property type="molecule type" value="protein"/>
</dbReference>
<dbReference type="Bgee" id="ENSMUSG00000059668">
    <property type="expression patterns" value="Expressed in superior surface of tongue and 90 other cell types or tissues"/>
</dbReference>
<dbReference type="GO" id="GO:0009986">
    <property type="term" value="C:cell surface"/>
    <property type="evidence" value="ECO:0007669"/>
    <property type="project" value="Ensembl"/>
</dbReference>
<dbReference type="GO" id="GO:0045095">
    <property type="term" value="C:keratin filament"/>
    <property type="evidence" value="ECO:0000304"/>
    <property type="project" value="UniProtKB"/>
</dbReference>
<dbReference type="GO" id="GO:0007010">
    <property type="term" value="P:cytoskeleton organization"/>
    <property type="evidence" value="ECO:0007669"/>
    <property type="project" value="Ensembl"/>
</dbReference>
<dbReference type="GO" id="GO:0030855">
    <property type="term" value="P:epithelial cell differentiation"/>
    <property type="evidence" value="ECO:0000315"/>
    <property type="project" value="UniProtKB"/>
</dbReference>
<dbReference type="GO" id="GO:0050680">
    <property type="term" value="P:negative regulation of epithelial cell proliferation"/>
    <property type="evidence" value="ECO:0000315"/>
    <property type="project" value="UniProtKB"/>
</dbReference>
<dbReference type="FunFam" id="1.20.5.1160:FF:000001">
    <property type="entry name" value="Keratin type II"/>
    <property type="match status" value="1"/>
</dbReference>
<dbReference type="FunFam" id="1.20.5.170:FF:000004">
    <property type="entry name" value="Keratin, type II cytoskeletal 5"/>
    <property type="match status" value="1"/>
</dbReference>
<dbReference type="FunFam" id="1.20.5.500:FF:000001">
    <property type="entry name" value="Type II keratin 23"/>
    <property type="match status" value="1"/>
</dbReference>
<dbReference type="Gene3D" id="1.20.5.170">
    <property type="match status" value="1"/>
</dbReference>
<dbReference type="Gene3D" id="1.20.5.500">
    <property type="entry name" value="Single helix bin"/>
    <property type="match status" value="1"/>
</dbReference>
<dbReference type="Gene3D" id="1.20.5.1160">
    <property type="entry name" value="Vasodilator-stimulated phosphoprotein"/>
    <property type="match status" value="1"/>
</dbReference>
<dbReference type="InterPro" id="IPR018039">
    <property type="entry name" value="IF_conserved"/>
</dbReference>
<dbReference type="InterPro" id="IPR039008">
    <property type="entry name" value="IF_rod_dom"/>
</dbReference>
<dbReference type="InterPro" id="IPR032444">
    <property type="entry name" value="Keratin_2_head"/>
</dbReference>
<dbReference type="InterPro" id="IPR003054">
    <property type="entry name" value="Keratin_II"/>
</dbReference>
<dbReference type="PANTHER" id="PTHR45616">
    <property type="entry name" value="GATA-TYPE DOMAIN-CONTAINING PROTEIN"/>
    <property type="match status" value="1"/>
</dbReference>
<dbReference type="PANTHER" id="PTHR45616:SF3">
    <property type="entry name" value="KERATIN, TYPE II CYTOSKELETAL 4"/>
    <property type="match status" value="1"/>
</dbReference>
<dbReference type="Pfam" id="PF00038">
    <property type="entry name" value="Filament"/>
    <property type="match status" value="1"/>
</dbReference>
<dbReference type="Pfam" id="PF16208">
    <property type="entry name" value="Keratin_2_head"/>
    <property type="match status" value="1"/>
</dbReference>
<dbReference type="PRINTS" id="PR01276">
    <property type="entry name" value="TYPE2KERATIN"/>
</dbReference>
<dbReference type="SMART" id="SM01391">
    <property type="entry name" value="Filament"/>
    <property type="match status" value="1"/>
</dbReference>
<dbReference type="SUPFAM" id="SSF64593">
    <property type="entry name" value="Intermediate filament protein, coiled coil region"/>
    <property type="match status" value="3"/>
</dbReference>
<dbReference type="PROSITE" id="PS00226">
    <property type="entry name" value="IF_ROD_1"/>
    <property type="match status" value="1"/>
</dbReference>
<dbReference type="PROSITE" id="PS51842">
    <property type="entry name" value="IF_ROD_2"/>
    <property type="match status" value="1"/>
</dbReference>
<keyword id="KW-0175">Coiled coil</keyword>
<keyword id="KW-0903">Direct protein sequencing</keyword>
<keyword id="KW-0403">Intermediate filament</keyword>
<keyword id="KW-0416">Keratin</keyword>
<keyword id="KW-0488">Methylation</keyword>
<keyword id="KW-1185">Reference proteome</keyword>